<organism>
    <name type="scientific">Bos taurus</name>
    <name type="common">Bovine</name>
    <dbReference type="NCBI Taxonomy" id="9913"/>
    <lineage>
        <taxon>Eukaryota</taxon>
        <taxon>Metazoa</taxon>
        <taxon>Chordata</taxon>
        <taxon>Craniata</taxon>
        <taxon>Vertebrata</taxon>
        <taxon>Euteleostomi</taxon>
        <taxon>Mammalia</taxon>
        <taxon>Eutheria</taxon>
        <taxon>Laurasiatheria</taxon>
        <taxon>Artiodactyla</taxon>
        <taxon>Ruminantia</taxon>
        <taxon>Pecora</taxon>
        <taxon>Bovidae</taxon>
        <taxon>Bovinae</taxon>
        <taxon>Bos</taxon>
    </lineage>
</organism>
<name>PHLA2_BOVIN</name>
<feature type="chain" id="PRO_0000369386" description="Pleckstrin homology-like domain family A member 2">
    <location>
        <begin position="1"/>
        <end position="142"/>
    </location>
</feature>
<feature type="domain" description="PH">
    <location>
        <begin position="7"/>
        <end position="99"/>
    </location>
</feature>
<feature type="modified residue" description="Phosphoserine" evidence="2">
    <location>
        <position position="3"/>
    </location>
</feature>
<evidence type="ECO:0000250" key="1"/>
<evidence type="ECO:0000250" key="2">
    <source>
        <dbReference type="UniProtKB" id="Q53GA4"/>
    </source>
</evidence>
<evidence type="ECO:0000305" key="3"/>
<sequence length="142" mass="15868">MRSPGEVLREGELEKRSDSLLQVWKKKRGVLTTDRLRLFPTGPGARPKELRFHSILKVDCVERTGKYVYFTIVTTDRKEIDFRCAGESYWNASITLALIDFQNRRAMQDFRSRRERAAAAAAAAAAAAAAEQEPEAGPGGQP</sequence>
<protein>
    <recommendedName>
        <fullName>Pleckstrin homology-like domain family A member 2</fullName>
    </recommendedName>
    <alternativeName>
        <fullName>Imprinted in placenta and liver protein</fullName>
    </alternativeName>
</protein>
<accession>Q0VC85</accession>
<dbReference type="EMBL" id="BC120298">
    <property type="protein sequence ID" value="AAI20299.1"/>
    <property type="molecule type" value="mRNA"/>
</dbReference>
<dbReference type="RefSeq" id="NP_001069989.1">
    <property type="nucleotide sequence ID" value="NM_001076521.2"/>
</dbReference>
<dbReference type="SMR" id="Q0VC85"/>
<dbReference type="FunCoup" id="Q0VC85">
    <property type="interactions" value="65"/>
</dbReference>
<dbReference type="STRING" id="9913.ENSBTAP00000041685"/>
<dbReference type="PaxDb" id="9913-ENSBTAP00000041685"/>
<dbReference type="Ensembl" id="ENSBTAT00000044171.3">
    <property type="protein sequence ID" value="ENSBTAP00000041685.2"/>
    <property type="gene ID" value="ENSBTAG00000031194.3"/>
</dbReference>
<dbReference type="Ensembl" id="ENSBTAT00000111070.1">
    <property type="protein sequence ID" value="ENSBTAP00000100655.1"/>
    <property type="gene ID" value="ENSBTAG00000031194.3"/>
</dbReference>
<dbReference type="GeneID" id="618810"/>
<dbReference type="KEGG" id="bta:618810"/>
<dbReference type="CTD" id="7262"/>
<dbReference type="VEuPathDB" id="HostDB:ENSBTAG00000031194"/>
<dbReference type="VGNC" id="VGNC:32836">
    <property type="gene designation" value="PHLDA2"/>
</dbReference>
<dbReference type="eggNOG" id="ENOG502RXZA">
    <property type="taxonomic scope" value="Eukaryota"/>
</dbReference>
<dbReference type="GeneTree" id="ENSGT00440000039564"/>
<dbReference type="InParanoid" id="Q0VC85"/>
<dbReference type="OMA" id="CWHAEIT"/>
<dbReference type="OrthoDB" id="9630709at2759"/>
<dbReference type="Proteomes" id="UP000009136">
    <property type="component" value="Chromosome 29"/>
</dbReference>
<dbReference type="Bgee" id="ENSBTAG00000031194">
    <property type="expression patterns" value="Expressed in placenta and 73 other cell types or tissues"/>
</dbReference>
<dbReference type="GO" id="GO:0005737">
    <property type="term" value="C:cytoplasm"/>
    <property type="evidence" value="ECO:0007669"/>
    <property type="project" value="UniProtKB-SubCell"/>
</dbReference>
<dbReference type="GO" id="GO:0016020">
    <property type="term" value="C:membrane"/>
    <property type="evidence" value="ECO:0007669"/>
    <property type="project" value="UniProtKB-SubCell"/>
</dbReference>
<dbReference type="GO" id="GO:1901981">
    <property type="term" value="F:phosphatidylinositol phosphate binding"/>
    <property type="evidence" value="ECO:0007669"/>
    <property type="project" value="InterPro"/>
</dbReference>
<dbReference type="GO" id="GO:0009887">
    <property type="term" value="P:animal organ morphogenesis"/>
    <property type="evidence" value="ECO:0007669"/>
    <property type="project" value="Ensembl"/>
</dbReference>
<dbReference type="GO" id="GO:0001890">
    <property type="term" value="P:placenta development"/>
    <property type="evidence" value="ECO:0000318"/>
    <property type="project" value="GO_Central"/>
</dbReference>
<dbReference type="GO" id="GO:0043065">
    <property type="term" value="P:positive regulation of apoptotic process"/>
    <property type="evidence" value="ECO:0007669"/>
    <property type="project" value="InterPro"/>
</dbReference>
<dbReference type="GO" id="GO:0030334">
    <property type="term" value="P:regulation of cell migration"/>
    <property type="evidence" value="ECO:0007669"/>
    <property type="project" value="Ensembl"/>
</dbReference>
<dbReference type="GO" id="GO:0045995">
    <property type="term" value="P:regulation of embryonic development"/>
    <property type="evidence" value="ECO:0007669"/>
    <property type="project" value="Ensembl"/>
</dbReference>
<dbReference type="GO" id="GO:0010468">
    <property type="term" value="P:regulation of gene expression"/>
    <property type="evidence" value="ECO:0007669"/>
    <property type="project" value="Ensembl"/>
</dbReference>
<dbReference type="GO" id="GO:0070873">
    <property type="term" value="P:regulation of glycogen metabolic process"/>
    <property type="evidence" value="ECO:0007669"/>
    <property type="project" value="Ensembl"/>
</dbReference>
<dbReference type="GO" id="GO:0060721">
    <property type="term" value="P:regulation of spongiotrophoblast cell proliferation"/>
    <property type="evidence" value="ECO:0007669"/>
    <property type="project" value="Ensembl"/>
</dbReference>
<dbReference type="CDD" id="cd00821">
    <property type="entry name" value="PH"/>
    <property type="match status" value="1"/>
</dbReference>
<dbReference type="FunFam" id="2.30.29.30:FF:000270">
    <property type="entry name" value="Pleckstrin homology-like domain family A member 3"/>
    <property type="match status" value="1"/>
</dbReference>
<dbReference type="Gene3D" id="2.30.29.30">
    <property type="entry name" value="Pleckstrin-homology domain (PH domain)/Phosphotyrosine-binding domain (PTB)"/>
    <property type="match status" value="1"/>
</dbReference>
<dbReference type="InterPro" id="IPR011993">
    <property type="entry name" value="PH-like_dom_sf"/>
</dbReference>
<dbReference type="InterPro" id="IPR001849">
    <property type="entry name" value="PH_domain"/>
</dbReference>
<dbReference type="InterPro" id="IPR042832">
    <property type="entry name" value="PHLA1/2/3"/>
</dbReference>
<dbReference type="PANTHER" id="PTHR15478:SF8">
    <property type="entry name" value="PLECKSTRIN HOMOLOGY-LIKE DOMAIN FAMILY A MEMBER 2"/>
    <property type="match status" value="1"/>
</dbReference>
<dbReference type="PANTHER" id="PTHR15478">
    <property type="entry name" value="PLECKSTRIN HOMOLOGY-LIKE DOMAIN, PQ-RICH PROTEIN"/>
    <property type="match status" value="1"/>
</dbReference>
<dbReference type="SMART" id="SM00233">
    <property type="entry name" value="PH"/>
    <property type="match status" value="1"/>
</dbReference>
<dbReference type="SUPFAM" id="SSF50729">
    <property type="entry name" value="PH domain-like"/>
    <property type="match status" value="1"/>
</dbReference>
<proteinExistence type="evidence at transcript level"/>
<comment type="function">
    <text evidence="1">Plays a role in regulating placenta growth. May act via its PH domain that competes with other PH domain-containing proteins, thereby preventing their binding to membrane lipids (By similarity).</text>
</comment>
<comment type="subcellular location">
    <subcellularLocation>
        <location evidence="1">Cytoplasm</location>
    </subcellularLocation>
    <subcellularLocation>
        <location evidence="1">Membrane</location>
        <topology evidence="1">Peripheral membrane protein</topology>
    </subcellularLocation>
</comment>
<comment type="domain">
    <text evidence="1">The PH domain binds phosphoinositides with a broad specificity. It may compete with the PH domain of some other proteins, thereby interfering with their binding to phosphatidylinositol 4,5-bisphosphate (PIP2) and phosphatidylinositol 3,4,5-trisphosphate (PIP3) (By similarity).</text>
</comment>
<comment type="similarity">
    <text evidence="3">Belongs to the PHLDA2 family.</text>
</comment>
<gene>
    <name type="primary">PHLDA2</name>
    <name type="synonym">IPL</name>
</gene>
<reference key="1">
    <citation type="submission" date="2006-08" db="EMBL/GenBank/DDBJ databases">
        <authorList>
            <consortium name="NIH - Mammalian Gene Collection (MGC) project"/>
        </authorList>
    </citation>
    <scope>NUCLEOTIDE SEQUENCE [LARGE SCALE MRNA]</scope>
    <source>
        <strain>Hereford</strain>
        <tissue>Placenta</tissue>
    </source>
</reference>
<keyword id="KW-0963">Cytoplasm</keyword>
<keyword id="KW-0472">Membrane</keyword>
<keyword id="KW-0597">Phosphoprotein</keyword>
<keyword id="KW-1185">Reference proteome</keyword>